<keyword id="KW-0488">Methylation</keyword>
<keyword id="KW-1185">Reference proteome</keyword>
<keyword id="KW-0687">Ribonucleoprotein</keyword>
<keyword id="KW-0689">Ribosomal protein</keyword>
<keyword id="KW-0694">RNA-binding</keyword>
<keyword id="KW-0699">rRNA-binding</keyword>
<proteinExistence type="inferred from homology"/>
<accession>A3N358</accession>
<feature type="chain" id="PRO_1000052002" description="Large ribosomal subunit protein uL3">
    <location>
        <begin position="1"/>
        <end position="208"/>
    </location>
</feature>
<feature type="modified residue" description="N5-methylglutamine" evidence="1">
    <location>
        <position position="149"/>
    </location>
</feature>
<dbReference type="EMBL" id="CP000569">
    <property type="protein sequence ID" value="ABN74844.1"/>
    <property type="molecule type" value="Genomic_DNA"/>
</dbReference>
<dbReference type="RefSeq" id="WP_005599280.1">
    <property type="nucleotide sequence ID" value="NC_009053.1"/>
</dbReference>
<dbReference type="SMR" id="A3N358"/>
<dbReference type="STRING" id="416269.APL_1760"/>
<dbReference type="EnsemblBacteria" id="ABN74844">
    <property type="protein sequence ID" value="ABN74844"/>
    <property type="gene ID" value="APL_1760"/>
</dbReference>
<dbReference type="GeneID" id="48600052"/>
<dbReference type="KEGG" id="apl:APL_1760"/>
<dbReference type="eggNOG" id="COG0087">
    <property type="taxonomic scope" value="Bacteria"/>
</dbReference>
<dbReference type="HOGENOM" id="CLU_044142_4_1_6"/>
<dbReference type="Proteomes" id="UP000001432">
    <property type="component" value="Chromosome"/>
</dbReference>
<dbReference type="GO" id="GO:0022625">
    <property type="term" value="C:cytosolic large ribosomal subunit"/>
    <property type="evidence" value="ECO:0007669"/>
    <property type="project" value="TreeGrafter"/>
</dbReference>
<dbReference type="GO" id="GO:0019843">
    <property type="term" value="F:rRNA binding"/>
    <property type="evidence" value="ECO:0007669"/>
    <property type="project" value="UniProtKB-UniRule"/>
</dbReference>
<dbReference type="GO" id="GO:0003735">
    <property type="term" value="F:structural constituent of ribosome"/>
    <property type="evidence" value="ECO:0007669"/>
    <property type="project" value="InterPro"/>
</dbReference>
<dbReference type="GO" id="GO:0006412">
    <property type="term" value="P:translation"/>
    <property type="evidence" value="ECO:0007669"/>
    <property type="project" value="UniProtKB-UniRule"/>
</dbReference>
<dbReference type="FunFam" id="2.40.30.10:FF:000004">
    <property type="entry name" value="50S ribosomal protein L3"/>
    <property type="match status" value="1"/>
</dbReference>
<dbReference type="FunFam" id="3.30.160.810:FF:000001">
    <property type="entry name" value="50S ribosomal protein L3"/>
    <property type="match status" value="1"/>
</dbReference>
<dbReference type="Gene3D" id="3.30.160.810">
    <property type="match status" value="1"/>
</dbReference>
<dbReference type="Gene3D" id="2.40.30.10">
    <property type="entry name" value="Translation factors"/>
    <property type="match status" value="1"/>
</dbReference>
<dbReference type="HAMAP" id="MF_01325_B">
    <property type="entry name" value="Ribosomal_uL3_B"/>
    <property type="match status" value="1"/>
</dbReference>
<dbReference type="InterPro" id="IPR000597">
    <property type="entry name" value="Ribosomal_uL3"/>
</dbReference>
<dbReference type="InterPro" id="IPR019927">
    <property type="entry name" value="Ribosomal_uL3_bac/org-type"/>
</dbReference>
<dbReference type="InterPro" id="IPR019926">
    <property type="entry name" value="Ribosomal_uL3_CS"/>
</dbReference>
<dbReference type="InterPro" id="IPR009000">
    <property type="entry name" value="Transl_B-barrel_sf"/>
</dbReference>
<dbReference type="NCBIfam" id="TIGR03625">
    <property type="entry name" value="L3_bact"/>
    <property type="match status" value="1"/>
</dbReference>
<dbReference type="PANTHER" id="PTHR11229">
    <property type="entry name" value="50S RIBOSOMAL PROTEIN L3"/>
    <property type="match status" value="1"/>
</dbReference>
<dbReference type="PANTHER" id="PTHR11229:SF16">
    <property type="entry name" value="LARGE RIBOSOMAL SUBUNIT PROTEIN UL3C"/>
    <property type="match status" value="1"/>
</dbReference>
<dbReference type="Pfam" id="PF00297">
    <property type="entry name" value="Ribosomal_L3"/>
    <property type="match status" value="1"/>
</dbReference>
<dbReference type="SUPFAM" id="SSF50447">
    <property type="entry name" value="Translation proteins"/>
    <property type="match status" value="1"/>
</dbReference>
<dbReference type="PROSITE" id="PS00474">
    <property type="entry name" value="RIBOSOMAL_L3"/>
    <property type="match status" value="1"/>
</dbReference>
<sequence length="208" mass="22383">MIGLVGRKVGMTRVFTEDGVSIPVTVIEIEANRVTQVKTLENDGYSAIQVTTGSKKANRVTKPEAGHFVKAGVEAGRGLWEFRTEGEEFTLGQEINVDIFTDVKKVDVTGTSKGKGFQGGVKRWNFRTQDATHGNSLSHRVLGSIGQNQTPGRVFKGKKMAGHLGAERVTVQSLEVVRVDAERKLLLVKGAVPGATNSDVIVKPAVKA</sequence>
<gene>
    <name evidence="1" type="primary">rplC</name>
    <name type="ordered locus">APL_1760</name>
</gene>
<evidence type="ECO:0000255" key="1">
    <source>
        <dbReference type="HAMAP-Rule" id="MF_01325"/>
    </source>
</evidence>
<evidence type="ECO:0000305" key="2"/>
<protein>
    <recommendedName>
        <fullName evidence="1">Large ribosomal subunit protein uL3</fullName>
    </recommendedName>
    <alternativeName>
        <fullName evidence="2">50S ribosomal protein L3</fullName>
    </alternativeName>
</protein>
<organism>
    <name type="scientific">Actinobacillus pleuropneumoniae serotype 5b (strain L20)</name>
    <dbReference type="NCBI Taxonomy" id="416269"/>
    <lineage>
        <taxon>Bacteria</taxon>
        <taxon>Pseudomonadati</taxon>
        <taxon>Pseudomonadota</taxon>
        <taxon>Gammaproteobacteria</taxon>
        <taxon>Pasteurellales</taxon>
        <taxon>Pasteurellaceae</taxon>
        <taxon>Actinobacillus</taxon>
    </lineage>
</organism>
<name>RL3_ACTP2</name>
<comment type="function">
    <text evidence="1">One of the primary rRNA binding proteins, it binds directly near the 3'-end of the 23S rRNA, where it nucleates assembly of the 50S subunit.</text>
</comment>
<comment type="subunit">
    <text evidence="1">Part of the 50S ribosomal subunit. Forms a cluster with proteins L14 and L19.</text>
</comment>
<comment type="PTM">
    <text evidence="1">Methylated by PrmB.</text>
</comment>
<comment type="similarity">
    <text evidence="1">Belongs to the universal ribosomal protein uL3 family.</text>
</comment>
<reference key="1">
    <citation type="journal article" date="2008" name="J. Bacteriol.">
        <title>The complete genome sequence of Actinobacillus pleuropneumoniae L20 (serotype 5b).</title>
        <authorList>
            <person name="Foote S.J."/>
            <person name="Bosse J.T."/>
            <person name="Bouevitch A.B."/>
            <person name="Langford P.R."/>
            <person name="Young N.M."/>
            <person name="Nash J.H.E."/>
        </authorList>
    </citation>
    <scope>NUCLEOTIDE SEQUENCE [LARGE SCALE GENOMIC DNA]</scope>
    <source>
        <strain>L20</strain>
    </source>
</reference>